<accession>A4TN28</accession>
<name>Y2315_YERPP</name>
<proteinExistence type="inferred from homology"/>
<reference key="1">
    <citation type="submission" date="2007-02" db="EMBL/GenBank/DDBJ databases">
        <title>Complete sequence of chromosome of Yersinia pestis Pestoides F.</title>
        <authorList>
            <consortium name="US DOE Joint Genome Institute"/>
            <person name="Copeland A."/>
            <person name="Lucas S."/>
            <person name="Lapidus A."/>
            <person name="Barry K."/>
            <person name="Detter J.C."/>
            <person name="Glavina del Rio T."/>
            <person name="Hammon N."/>
            <person name="Israni S."/>
            <person name="Dalin E."/>
            <person name="Tice H."/>
            <person name="Pitluck S."/>
            <person name="Di Bartolo G."/>
            <person name="Chain P."/>
            <person name="Malfatti S."/>
            <person name="Shin M."/>
            <person name="Vergez L."/>
            <person name="Schmutz J."/>
            <person name="Larimer F."/>
            <person name="Land M."/>
            <person name="Hauser L."/>
            <person name="Worsham P."/>
            <person name="Chu M."/>
            <person name="Bearden S."/>
            <person name="Garcia E."/>
            <person name="Richardson P."/>
        </authorList>
    </citation>
    <scope>NUCLEOTIDE SEQUENCE [LARGE SCALE GENOMIC DNA]</scope>
    <source>
        <strain>Pestoides F</strain>
    </source>
</reference>
<keyword id="KW-0997">Cell inner membrane</keyword>
<keyword id="KW-1003">Cell membrane</keyword>
<keyword id="KW-0472">Membrane</keyword>
<keyword id="KW-0812">Transmembrane</keyword>
<keyword id="KW-1133">Transmembrane helix</keyword>
<keyword id="KW-0813">Transport</keyword>
<dbReference type="EMBL" id="CP000668">
    <property type="protein sequence ID" value="ABP40690.1"/>
    <property type="molecule type" value="Genomic_DNA"/>
</dbReference>
<dbReference type="RefSeq" id="WP_002211335.1">
    <property type="nucleotide sequence ID" value="NZ_CP009715.1"/>
</dbReference>
<dbReference type="SMR" id="A4TN28"/>
<dbReference type="KEGG" id="ypp:YPDSF_2315"/>
<dbReference type="PATRIC" id="fig|386656.14.peg.3810"/>
<dbReference type="GO" id="GO:0005886">
    <property type="term" value="C:plasma membrane"/>
    <property type="evidence" value="ECO:0007669"/>
    <property type="project" value="UniProtKB-SubCell"/>
</dbReference>
<dbReference type="GO" id="GO:0022857">
    <property type="term" value="F:transmembrane transporter activity"/>
    <property type="evidence" value="ECO:0007669"/>
    <property type="project" value="UniProtKB-UniRule"/>
</dbReference>
<dbReference type="CDD" id="cd17477">
    <property type="entry name" value="MFS_YcaD_like"/>
    <property type="match status" value="1"/>
</dbReference>
<dbReference type="FunFam" id="1.20.1250.20:FF:000041">
    <property type="entry name" value="Uncharacterized MFS-type transporter YcaD"/>
    <property type="match status" value="1"/>
</dbReference>
<dbReference type="FunFam" id="1.20.1250.20:FF:000066">
    <property type="entry name" value="Uncharacterized MFS-type transporter YcaD"/>
    <property type="match status" value="1"/>
</dbReference>
<dbReference type="Gene3D" id="1.20.1250.20">
    <property type="entry name" value="MFS general substrate transporter like domains"/>
    <property type="match status" value="2"/>
</dbReference>
<dbReference type="HAMAP" id="MF_01149">
    <property type="entry name" value="MFS_YcaD"/>
    <property type="match status" value="1"/>
</dbReference>
<dbReference type="InterPro" id="IPR011701">
    <property type="entry name" value="MFS"/>
</dbReference>
<dbReference type="InterPro" id="IPR020846">
    <property type="entry name" value="MFS_dom"/>
</dbReference>
<dbReference type="InterPro" id="IPR036259">
    <property type="entry name" value="MFS_trans_sf"/>
</dbReference>
<dbReference type="InterPro" id="IPR023745">
    <property type="entry name" value="MFS_YcaD"/>
</dbReference>
<dbReference type="InterPro" id="IPR047200">
    <property type="entry name" value="MFS_YcaD-like"/>
</dbReference>
<dbReference type="NCBIfam" id="NF002962">
    <property type="entry name" value="PRK03633.1"/>
    <property type="match status" value="1"/>
</dbReference>
<dbReference type="PANTHER" id="PTHR23521">
    <property type="entry name" value="TRANSPORTER MFS SUPERFAMILY"/>
    <property type="match status" value="1"/>
</dbReference>
<dbReference type="PANTHER" id="PTHR23521:SF2">
    <property type="entry name" value="TRANSPORTER MFS SUPERFAMILY"/>
    <property type="match status" value="1"/>
</dbReference>
<dbReference type="Pfam" id="PF07690">
    <property type="entry name" value="MFS_1"/>
    <property type="match status" value="1"/>
</dbReference>
<dbReference type="SUPFAM" id="SSF103473">
    <property type="entry name" value="MFS general substrate transporter"/>
    <property type="match status" value="1"/>
</dbReference>
<dbReference type="PROSITE" id="PS50850">
    <property type="entry name" value="MFS"/>
    <property type="match status" value="1"/>
</dbReference>
<gene>
    <name type="ordered locus">YPDSF_2315</name>
</gene>
<comment type="subcellular location">
    <subcellularLocation>
        <location evidence="1">Cell inner membrane</location>
        <topology evidence="1">Multi-pass membrane protein</topology>
    </subcellularLocation>
</comment>
<comment type="similarity">
    <text evidence="1">Belongs to the major facilitator superfamily. YcaD (TC 2.A.1.26) family.</text>
</comment>
<feature type="chain" id="PRO_1000085098" description="Uncharacterized MFS-type transporter YPDSF_2315">
    <location>
        <begin position="1"/>
        <end position="382"/>
    </location>
</feature>
<feature type="transmembrane region" description="Helical" evidence="1">
    <location>
        <begin position="8"/>
        <end position="28"/>
    </location>
</feature>
<feature type="transmembrane region" description="Helical" evidence="1">
    <location>
        <begin position="41"/>
        <end position="61"/>
    </location>
</feature>
<feature type="transmembrane region" description="Helical" evidence="1">
    <location>
        <begin position="73"/>
        <end position="93"/>
    </location>
</feature>
<feature type="transmembrane region" description="Helical" evidence="1">
    <location>
        <begin position="94"/>
        <end position="114"/>
    </location>
</feature>
<feature type="transmembrane region" description="Helical" evidence="1">
    <location>
        <begin position="133"/>
        <end position="153"/>
    </location>
</feature>
<feature type="transmembrane region" description="Helical" evidence="1">
    <location>
        <begin position="157"/>
        <end position="177"/>
    </location>
</feature>
<feature type="transmembrane region" description="Helical" evidence="1">
    <location>
        <begin position="208"/>
        <end position="228"/>
    </location>
</feature>
<feature type="transmembrane region" description="Helical" evidence="1">
    <location>
        <begin position="235"/>
        <end position="255"/>
    </location>
</feature>
<feature type="transmembrane region" description="Helical" evidence="1">
    <location>
        <begin position="274"/>
        <end position="294"/>
    </location>
</feature>
<feature type="transmembrane region" description="Helical" evidence="1">
    <location>
        <begin position="325"/>
        <end position="345"/>
    </location>
</feature>
<feature type="transmembrane region" description="Helical" evidence="1">
    <location>
        <begin position="349"/>
        <end position="369"/>
    </location>
</feature>
<organism>
    <name type="scientific">Yersinia pestis (strain Pestoides F)</name>
    <dbReference type="NCBI Taxonomy" id="386656"/>
    <lineage>
        <taxon>Bacteria</taxon>
        <taxon>Pseudomonadati</taxon>
        <taxon>Pseudomonadota</taxon>
        <taxon>Gammaproteobacteria</taxon>
        <taxon>Enterobacterales</taxon>
        <taxon>Yersiniaceae</taxon>
        <taxon>Yersinia</taxon>
    </lineage>
</organism>
<protein>
    <recommendedName>
        <fullName evidence="1">Uncharacterized MFS-type transporter YPDSF_2315</fullName>
    </recommendedName>
</protein>
<evidence type="ECO:0000255" key="1">
    <source>
        <dbReference type="HAMAP-Rule" id="MF_01149"/>
    </source>
</evidence>
<sequence>MSAYSRPVLLLLCGLLLFTISIAVLNTLVPLWLSHQQLPTWQVGMVSSSYFTGNLVGTLIAGRFIQQLGFNRSYHCSCILFALATCGLMLTVDFWSWLGWRFLAGIACALIWVIVESALLRSGTLTNRGQLLAAYMMVYYLGTVIGQLLLGIVSTQLLSVIPWVGALVITAMLPLLFAQFSHQSRHESPPIAVWPMLKRRSARLGINGCIISGVLLGSLYGLLPLYLSHKGMSDASVGGWMALLVSSGIIGQWPMGRMADRYGRLLVLRIQVFVVILGSVAILGNYAMAPALFILGCAGFTLYPVAMAWACEKASADELVAMNQALLMSYTLGSLAGPTMTSLLMQRYSDNLLFIMIAGVAFVYLMMLLRKPDHQQTPYAAV</sequence>